<feature type="chain" id="PRO_0000279671" description="HTH-type transcriptional repressor PurR">
    <location>
        <begin position="1"/>
        <end position="341"/>
    </location>
</feature>
<feature type="domain" description="HTH lacI-type" evidence="1">
    <location>
        <begin position="2"/>
        <end position="56"/>
    </location>
</feature>
<feature type="DNA-binding region" description="H-T-H motif" evidence="1">
    <location>
        <begin position="4"/>
        <end position="23"/>
    </location>
</feature>
<feature type="DNA-binding region" evidence="1">
    <location>
        <begin position="48"/>
        <end position="56"/>
    </location>
</feature>
<feature type="binding site" evidence="1">
    <location>
        <position position="73"/>
    </location>
    <ligand>
        <name>hypoxanthine</name>
        <dbReference type="ChEBI" id="CHEBI:17368"/>
    </ligand>
</feature>
<feature type="binding site" evidence="1">
    <location>
        <position position="190"/>
    </location>
    <ligand>
        <name>hypoxanthine</name>
        <dbReference type="ChEBI" id="CHEBI:17368"/>
    </ligand>
</feature>
<feature type="binding site" evidence="1">
    <location>
        <position position="192"/>
    </location>
    <ligand>
        <name>hypoxanthine</name>
        <dbReference type="ChEBI" id="CHEBI:17368"/>
    </ligand>
</feature>
<feature type="binding site" evidence="1">
    <location>
        <position position="221"/>
    </location>
    <ligand>
        <name>hypoxanthine</name>
        <dbReference type="ChEBI" id="CHEBI:17368"/>
    </ligand>
</feature>
<feature type="binding site" evidence="1">
    <location>
        <position position="275"/>
    </location>
    <ligand>
        <name>hypoxanthine</name>
        <dbReference type="ChEBI" id="CHEBI:17368"/>
    </ligand>
</feature>
<sequence length="341" mass="38203">MATIKDVAKRANVSTTTVSHVINKTRFVAEETRNAVWAAIKELHYSPSAVARSLKVNHTKSIGLLATSSEAAYFAEIIEAVEKNCFQKGYTLILGNAWNNLEKQRAYLSMMAQKRVDGLLVMCSEYPEPLLAMLEEYRHIPMVVMDWGEAKADFTDAVIDNAFEGGYMAGRYLIERGHREIGVIPGPLERNTGAGRLVGFMKAMEEAMIKVPESWIVQGDFEPESGYRAMQQILSQPHRPTAVFCGGDIMAMGALCAADEMGLRVPQDVSLIGYDNVRNARYFTPALTTIHQPKDSLGETAFNMLLDRIVNKREEPQSIEVHPRLIERRSVADGPFRDYRR</sequence>
<evidence type="ECO:0000255" key="1">
    <source>
        <dbReference type="HAMAP-Rule" id="MF_01277"/>
    </source>
</evidence>
<name>PURR_SHISS</name>
<protein>
    <recommendedName>
        <fullName evidence="1">HTH-type transcriptional repressor PurR</fullName>
    </recommendedName>
    <alternativeName>
        <fullName evidence="1">Pur regulon repressor</fullName>
    </alternativeName>
    <alternativeName>
        <fullName evidence="1">Purine nucleotide synthesis repressor</fullName>
    </alternativeName>
</protein>
<comment type="function">
    <text evidence="1">Is the main repressor of the genes involved in the de novo synthesis of purine nucleotides, regulating purB, purC, purEK, purF, purHD, purL, purMN and guaBA expression. PurR is allosterically activated to bind its cognate DNA by binding the purine corepressors, hypoxanthine or guanine, thereby effecting transcription repression.</text>
</comment>
<comment type="pathway">
    <text>Purine metabolism; purine nucleotide biosynthesis [regulation].</text>
</comment>
<comment type="subunit">
    <text evidence="1">Homodimer.</text>
</comment>
<comment type="domain">
    <text evidence="1">Consists of two structural and functional domains: an N-terminal DNA-binding domain, approximately the first 60 residues, and a larger C-terminal domain, approximately 280 residues, which imparts the function of corepressor binding and oligomerization.</text>
</comment>
<keyword id="KW-0238">DNA-binding</keyword>
<keyword id="KW-0658">Purine biosynthesis</keyword>
<keyword id="KW-1185">Reference proteome</keyword>
<keyword id="KW-0678">Repressor</keyword>
<keyword id="KW-0804">Transcription</keyword>
<keyword id="KW-0805">Transcription regulation</keyword>
<dbReference type="EMBL" id="CP000038">
    <property type="protein sequence ID" value="AAZ88199.1"/>
    <property type="molecule type" value="Genomic_DNA"/>
</dbReference>
<dbReference type="RefSeq" id="WP_000190988.1">
    <property type="nucleotide sequence ID" value="NC_007384.1"/>
</dbReference>
<dbReference type="SMR" id="Q3Z213"/>
<dbReference type="GeneID" id="93775813"/>
<dbReference type="KEGG" id="ssn:SSON_1498"/>
<dbReference type="HOGENOM" id="CLU_037628_6_2_6"/>
<dbReference type="UniPathway" id="UPA00488"/>
<dbReference type="Proteomes" id="UP000002529">
    <property type="component" value="Chromosome"/>
</dbReference>
<dbReference type="GO" id="GO:0003700">
    <property type="term" value="F:DNA-binding transcription factor activity"/>
    <property type="evidence" value="ECO:0007669"/>
    <property type="project" value="TreeGrafter"/>
</dbReference>
<dbReference type="GO" id="GO:0000976">
    <property type="term" value="F:transcription cis-regulatory region binding"/>
    <property type="evidence" value="ECO:0007669"/>
    <property type="project" value="TreeGrafter"/>
</dbReference>
<dbReference type="GO" id="GO:0045892">
    <property type="term" value="P:negative regulation of DNA-templated transcription"/>
    <property type="evidence" value="ECO:0007669"/>
    <property type="project" value="UniProtKB-UniRule"/>
</dbReference>
<dbReference type="GO" id="GO:0006164">
    <property type="term" value="P:purine nucleotide biosynthetic process"/>
    <property type="evidence" value="ECO:0007669"/>
    <property type="project" value="UniProtKB-UniPathway"/>
</dbReference>
<dbReference type="CDD" id="cd01392">
    <property type="entry name" value="HTH_LacI"/>
    <property type="match status" value="1"/>
</dbReference>
<dbReference type="CDD" id="cd06275">
    <property type="entry name" value="PBP1_PurR"/>
    <property type="match status" value="1"/>
</dbReference>
<dbReference type="FunFam" id="1.10.260.40:FF:000002">
    <property type="entry name" value="HTH-type transcriptional repressor PurR"/>
    <property type="match status" value="1"/>
</dbReference>
<dbReference type="FunFam" id="3.40.50.2300:FF:000045">
    <property type="entry name" value="HTH-type transcriptional repressor PurR"/>
    <property type="match status" value="1"/>
</dbReference>
<dbReference type="Gene3D" id="3.40.50.2300">
    <property type="match status" value="2"/>
</dbReference>
<dbReference type="Gene3D" id="1.10.260.40">
    <property type="entry name" value="lambda repressor-like DNA-binding domains"/>
    <property type="match status" value="1"/>
</dbReference>
<dbReference type="HAMAP" id="MF_01277">
    <property type="entry name" value="HTH_type_PurR"/>
    <property type="match status" value="1"/>
</dbReference>
<dbReference type="InterPro" id="IPR000843">
    <property type="entry name" value="HTH_LacI"/>
</dbReference>
<dbReference type="InterPro" id="IPR046335">
    <property type="entry name" value="LacI/GalR-like_sensor"/>
</dbReference>
<dbReference type="InterPro" id="IPR010982">
    <property type="entry name" value="Lambda_DNA-bd_dom_sf"/>
</dbReference>
<dbReference type="InterPro" id="IPR028082">
    <property type="entry name" value="Peripla_BP_I"/>
</dbReference>
<dbReference type="InterPro" id="IPR023588">
    <property type="entry name" value="Tscrpt_reg_HTH_PurR"/>
</dbReference>
<dbReference type="NCBIfam" id="NF007979">
    <property type="entry name" value="PRK10703.1"/>
    <property type="match status" value="1"/>
</dbReference>
<dbReference type="PANTHER" id="PTHR30146:SF148">
    <property type="entry name" value="HTH-TYPE TRANSCRIPTIONAL REPRESSOR PURR-RELATED"/>
    <property type="match status" value="1"/>
</dbReference>
<dbReference type="PANTHER" id="PTHR30146">
    <property type="entry name" value="LACI-RELATED TRANSCRIPTIONAL REPRESSOR"/>
    <property type="match status" value="1"/>
</dbReference>
<dbReference type="Pfam" id="PF00356">
    <property type="entry name" value="LacI"/>
    <property type="match status" value="1"/>
</dbReference>
<dbReference type="Pfam" id="PF13377">
    <property type="entry name" value="Peripla_BP_3"/>
    <property type="match status" value="1"/>
</dbReference>
<dbReference type="PRINTS" id="PR00036">
    <property type="entry name" value="HTHLACI"/>
</dbReference>
<dbReference type="SMART" id="SM00354">
    <property type="entry name" value="HTH_LACI"/>
    <property type="match status" value="1"/>
</dbReference>
<dbReference type="SUPFAM" id="SSF47413">
    <property type="entry name" value="lambda repressor-like DNA-binding domains"/>
    <property type="match status" value="1"/>
</dbReference>
<dbReference type="SUPFAM" id="SSF53822">
    <property type="entry name" value="Periplasmic binding protein-like I"/>
    <property type="match status" value="1"/>
</dbReference>
<dbReference type="PROSITE" id="PS00356">
    <property type="entry name" value="HTH_LACI_1"/>
    <property type="match status" value="1"/>
</dbReference>
<dbReference type="PROSITE" id="PS50932">
    <property type="entry name" value="HTH_LACI_2"/>
    <property type="match status" value="1"/>
</dbReference>
<organism>
    <name type="scientific">Shigella sonnei (strain Ss046)</name>
    <dbReference type="NCBI Taxonomy" id="300269"/>
    <lineage>
        <taxon>Bacteria</taxon>
        <taxon>Pseudomonadati</taxon>
        <taxon>Pseudomonadota</taxon>
        <taxon>Gammaproteobacteria</taxon>
        <taxon>Enterobacterales</taxon>
        <taxon>Enterobacteriaceae</taxon>
        <taxon>Shigella</taxon>
    </lineage>
</organism>
<proteinExistence type="inferred from homology"/>
<accession>Q3Z213</accession>
<reference key="1">
    <citation type="journal article" date="2005" name="Nucleic Acids Res.">
        <title>Genome dynamics and diversity of Shigella species, the etiologic agents of bacillary dysentery.</title>
        <authorList>
            <person name="Yang F."/>
            <person name="Yang J."/>
            <person name="Zhang X."/>
            <person name="Chen L."/>
            <person name="Jiang Y."/>
            <person name="Yan Y."/>
            <person name="Tang X."/>
            <person name="Wang J."/>
            <person name="Xiong Z."/>
            <person name="Dong J."/>
            <person name="Xue Y."/>
            <person name="Zhu Y."/>
            <person name="Xu X."/>
            <person name="Sun L."/>
            <person name="Chen S."/>
            <person name="Nie H."/>
            <person name="Peng J."/>
            <person name="Xu J."/>
            <person name="Wang Y."/>
            <person name="Yuan Z."/>
            <person name="Wen Y."/>
            <person name="Yao Z."/>
            <person name="Shen Y."/>
            <person name="Qiang B."/>
            <person name="Hou Y."/>
            <person name="Yu J."/>
            <person name="Jin Q."/>
        </authorList>
    </citation>
    <scope>NUCLEOTIDE SEQUENCE [LARGE SCALE GENOMIC DNA]</scope>
    <source>
        <strain>Ss046</strain>
    </source>
</reference>
<gene>
    <name evidence="1" type="primary">purR</name>
    <name type="ordered locus">SSON_1498</name>
</gene>